<feature type="chain" id="PRO_0000454694" description="Terpene synthase 17">
    <location>
        <begin position="1"/>
        <end position="554"/>
    </location>
</feature>
<feature type="short sequence motif" description="DDXXD motif" evidence="1">
    <location>
        <begin position="306"/>
        <end position="310"/>
    </location>
</feature>
<feature type="binding site" evidence="2">
    <location>
        <position position="306"/>
    </location>
    <ligand>
        <name>Mg(2+)</name>
        <dbReference type="ChEBI" id="CHEBI:18420"/>
        <label>1</label>
    </ligand>
</feature>
<feature type="binding site" evidence="2">
    <location>
        <position position="306"/>
    </location>
    <ligand>
        <name>Mg(2+)</name>
        <dbReference type="ChEBI" id="CHEBI:18420"/>
        <label>2</label>
    </ligand>
</feature>
<feature type="binding site" evidence="2">
    <location>
        <position position="310"/>
    </location>
    <ligand>
        <name>Mg(2+)</name>
        <dbReference type="ChEBI" id="CHEBI:18420"/>
        <label>1</label>
    </ligand>
</feature>
<feature type="binding site" evidence="2">
    <location>
        <position position="310"/>
    </location>
    <ligand>
        <name>Mg(2+)</name>
        <dbReference type="ChEBI" id="CHEBI:18420"/>
        <label>2</label>
    </ligand>
</feature>
<feature type="binding site" evidence="2">
    <location>
        <position position="458"/>
    </location>
    <ligand>
        <name>Mg(2+)</name>
        <dbReference type="ChEBI" id="CHEBI:18420"/>
        <label>3</label>
    </ligand>
</feature>
<proteinExistence type="evidence at protein level"/>
<keyword id="KW-0456">Lyase</keyword>
<keyword id="KW-0460">Magnesium</keyword>
<keyword id="KW-0479">Metal-binding</keyword>
<keyword id="KW-1185">Reference proteome</keyword>
<comment type="function">
    <text evidence="4">Sesquiterpene synthase involved in the biosynthesis of volatile compounds (PubMed:21818683). Mediates the conversion of (2E,6E)-farnesyl diphosphate (FPP) into gamma-gurjunene, (E)-beta-farnesene and (+)-valencene, and of (2Z,6Z)-farnesyl diphosphate ((ZZ)-FPP) into (E)-alpha-bergamotene and (Z)-gamma-bisabolene as well as beta-bisabolene, (Z)-alpha-bergamotene and (E)-gamma-bisabolene to a lower extent (PubMed:21818683). Can act with a low efficiency as a monoterpene synthase with geranyl diphosphate (GPP) as substrate, thus producing beta-myrcene, (E)-beta-ocimene, limonene, terpinolene, gamma-terpinene and (Z)-beta-ocimene (PubMed:21818683).</text>
</comment>
<comment type="catalytic activity">
    <reaction evidence="4">
        <text>(2Z,6Z)-farnesyl diphosphate = beta-bisabolene + diphosphate</text>
        <dbReference type="Rhea" id="RHEA:68524"/>
        <dbReference type="ChEBI" id="CHEBI:33019"/>
        <dbReference type="ChEBI" id="CHEBI:49249"/>
        <dbReference type="ChEBI" id="CHEBI:60374"/>
    </reaction>
    <physiologicalReaction direction="left-to-right" evidence="4">
        <dbReference type="Rhea" id="RHEA:68525"/>
    </physiologicalReaction>
</comment>
<comment type="catalytic activity">
    <reaction evidence="4">
        <text>(2E,6E)-farnesyl diphosphate = (+)-valencene + diphosphate</text>
        <dbReference type="Rhea" id="RHEA:29511"/>
        <dbReference type="ChEBI" id="CHEBI:33019"/>
        <dbReference type="ChEBI" id="CHEBI:61700"/>
        <dbReference type="ChEBI" id="CHEBI:175763"/>
        <dbReference type="EC" id="4.2.3.73"/>
    </reaction>
    <physiologicalReaction direction="left-to-right" evidence="4">
        <dbReference type="Rhea" id="RHEA:29512"/>
    </physiologicalReaction>
</comment>
<comment type="catalytic activity">
    <reaction evidence="4">
        <text>(2E,6E)-farnesyl diphosphate = (E)-beta-farnesene + diphosphate</text>
        <dbReference type="Rhea" id="RHEA:27425"/>
        <dbReference type="ChEBI" id="CHEBI:10418"/>
        <dbReference type="ChEBI" id="CHEBI:33019"/>
        <dbReference type="ChEBI" id="CHEBI:175763"/>
        <dbReference type="EC" id="4.2.3.47"/>
    </reaction>
    <physiologicalReaction direction="left-to-right" evidence="4">
        <dbReference type="Rhea" id="RHEA:27426"/>
    </physiologicalReaction>
</comment>
<comment type="catalytic activity">
    <reaction evidence="4">
        <text>(2E,6E)-farnesyl diphosphate = gamma-gurjunene + diphosphate</text>
        <dbReference type="Rhea" id="RHEA:68400"/>
        <dbReference type="ChEBI" id="CHEBI:33019"/>
        <dbReference type="ChEBI" id="CHEBI:175763"/>
        <dbReference type="ChEBI" id="CHEBI:178033"/>
    </reaction>
    <physiologicalReaction direction="left-to-right" evidence="4">
        <dbReference type="Rhea" id="RHEA:68401"/>
    </physiologicalReaction>
</comment>
<comment type="catalytic activity">
    <reaction evidence="4">
        <text>(2Z,6Z)-farnesyl diphosphate = (E)-gamma-bisabolene + diphosphate</text>
        <dbReference type="Rhea" id="RHEA:68468"/>
        <dbReference type="ChEBI" id="CHEBI:33019"/>
        <dbReference type="ChEBI" id="CHEBI:49239"/>
        <dbReference type="ChEBI" id="CHEBI:60374"/>
    </reaction>
    <physiologicalReaction direction="left-to-right" evidence="4">
        <dbReference type="Rhea" id="RHEA:68469"/>
    </physiologicalReaction>
</comment>
<comment type="catalytic activity">
    <reaction evidence="4">
        <text>(2E)-geranyl diphosphate = limonene + diphosphate</text>
        <dbReference type="Rhea" id="RHEA:68640"/>
        <dbReference type="ChEBI" id="CHEBI:15384"/>
        <dbReference type="ChEBI" id="CHEBI:33019"/>
        <dbReference type="ChEBI" id="CHEBI:58057"/>
    </reaction>
    <physiologicalReaction direction="left-to-right" evidence="4">
        <dbReference type="Rhea" id="RHEA:68641"/>
    </physiologicalReaction>
</comment>
<comment type="catalytic activity">
    <reaction evidence="4">
        <text>(2E)-geranyl diphosphate = beta-myrcene + diphosphate</text>
        <dbReference type="Rhea" id="RHEA:16965"/>
        <dbReference type="ChEBI" id="CHEBI:17221"/>
        <dbReference type="ChEBI" id="CHEBI:33019"/>
        <dbReference type="ChEBI" id="CHEBI:58057"/>
        <dbReference type="EC" id="4.2.3.15"/>
    </reaction>
    <physiologicalReaction direction="left-to-right" evidence="4">
        <dbReference type="Rhea" id="RHEA:16966"/>
    </physiologicalReaction>
</comment>
<comment type="catalytic activity">
    <reaction evidence="4">
        <text>(2E)-geranyl diphosphate = (E)-beta-ocimene + diphosphate</text>
        <dbReference type="Rhea" id="RHEA:32691"/>
        <dbReference type="ChEBI" id="CHEBI:33019"/>
        <dbReference type="ChEBI" id="CHEBI:58057"/>
        <dbReference type="ChEBI" id="CHEBI:64280"/>
        <dbReference type="EC" id="4.2.3.106"/>
    </reaction>
    <physiologicalReaction direction="left-to-right" evidence="4">
        <dbReference type="Rhea" id="RHEA:32692"/>
    </physiologicalReaction>
</comment>
<comment type="catalytic activity">
    <reaction evidence="4">
        <text>(2E)-geranyl diphosphate = terpinolene + diphosphate</text>
        <dbReference type="Rhea" id="RHEA:25500"/>
        <dbReference type="ChEBI" id="CHEBI:9457"/>
        <dbReference type="ChEBI" id="CHEBI:33019"/>
        <dbReference type="ChEBI" id="CHEBI:58057"/>
        <dbReference type="EC" id="4.2.3.113"/>
    </reaction>
    <physiologicalReaction direction="left-to-right" evidence="4">
        <dbReference type="Rhea" id="RHEA:25501"/>
    </physiologicalReaction>
</comment>
<comment type="catalytic activity">
    <reaction evidence="4">
        <text>(2E)-geranyl diphosphate = gamma-terpinene + diphosphate</text>
        <dbReference type="Rhea" id="RHEA:32559"/>
        <dbReference type="ChEBI" id="CHEBI:10577"/>
        <dbReference type="ChEBI" id="CHEBI:33019"/>
        <dbReference type="ChEBI" id="CHEBI:58057"/>
        <dbReference type="EC" id="4.2.3.114"/>
    </reaction>
    <physiologicalReaction direction="left-to-right" evidence="4">
        <dbReference type="Rhea" id="RHEA:32560"/>
    </physiologicalReaction>
</comment>
<comment type="catalytic activity">
    <reaction evidence="4">
        <text>(2Z,6Z)-farnesyl diphosphate = (Z)-gamma-bisabolene + diphosphate</text>
        <dbReference type="Rhea" id="RHEA:68788"/>
        <dbReference type="ChEBI" id="CHEBI:33019"/>
        <dbReference type="ChEBI" id="CHEBI:49238"/>
        <dbReference type="ChEBI" id="CHEBI:60374"/>
    </reaction>
    <physiologicalReaction direction="left-to-right" evidence="4">
        <dbReference type="Rhea" id="RHEA:68789"/>
    </physiologicalReaction>
</comment>
<comment type="catalytic activity">
    <reaction evidence="4">
        <text>(2E,6E)-farnesyl diphosphate = (1S,5S,6R)-alpha-bergamotene + diphosphate</text>
        <dbReference type="Rhea" id="RHEA:31427"/>
        <dbReference type="ChEBI" id="CHEBI:33019"/>
        <dbReference type="ChEBI" id="CHEBI:62756"/>
        <dbReference type="ChEBI" id="CHEBI:175763"/>
        <dbReference type="EC" id="4.2.3.81"/>
    </reaction>
    <physiologicalReaction direction="left-to-right" evidence="4">
        <dbReference type="Rhea" id="RHEA:31428"/>
    </physiologicalReaction>
</comment>
<comment type="catalytic activity">
    <reaction evidence="4">
        <text>(2Z,6Z)-farnesyl diphosphate = (1S,5S,6S)-alpha-bergamotene + diphosphate</text>
        <dbReference type="Rhea" id="RHEA:30471"/>
        <dbReference type="ChEBI" id="CHEBI:33019"/>
        <dbReference type="ChEBI" id="CHEBI:60374"/>
        <dbReference type="ChEBI" id="CHEBI:61679"/>
        <dbReference type="EC" id="4.2.3.54"/>
    </reaction>
    <physiologicalReaction direction="left-to-right" evidence="4">
        <dbReference type="Rhea" id="RHEA:30472"/>
    </physiologicalReaction>
</comment>
<comment type="cofactor">
    <cofactor evidence="1">
        <name>Mg(2+)</name>
        <dbReference type="ChEBI" id="CHEBI:18420"/>
    </cofactor>
    <cofactor evidence="1">
        <name>Mn(2+)</name>
        <dbReference type="ChEBI" id="CHEBI:29035"/>
    </cofactor>
    <text evidence="1">Binds 3 Mg(2+) or Mn(2+) ions per subunit.</text>
</comment>
<comment type="pathway">
    <text evidence="4">Secondary metabolite biosynthesis; terpenoid biosynthesis.</text>
</comment>
<comment type="tissue specificity">
    <text evidence="3 4">Mostly expressed in stem and trichomes, to a lower extent in leaves, flowers and roots and, at low levels, in fruits.</text>
</comment>
<comment type="induction">
    <text evidence="4">Lower levels upon jasmonic acid treatment.</text>
</comment>
<comment type="domain">
    <text evidence="2">The Asp-Asp-Xaa-Xaa-Asp/Glu (DDXXD/E) motif is important for the catalytic activity, presumably through binding to Mg(2+).</text>
</comment>
<comment type="similarity">
    <text evidence="7">Belongs to the terpene synthase family. Tpsa subfamily.</text>
</comment>
<dbReference type="EC" id="4.2.3.73" evidence="4"/>
<dbReference type="EC" id="4.2.3.47" evidence="4"/>
<dbReference type="EC" id="4.2.3.106" evidence="4"/>
<dbReference type="EC" id="4.2.3.-" evidence="4"/>
<dbReference type="EC" id="4.2.3.54" evidence="4"/>
<dbReference type="EC" id="4.2.3.81" evidence="4"/>
<dbReference type="EC" id="4.2.3.15" evidence="4"/>
<dbReference type="EC" id="4.2.3.114" evidence="4"/>
<dbReference type="EC" id="4.2.3.113" evidence="4"/>
<dbReference type="EMBL" id="JN402395">
    <property type="protein sequence ID" value="AEM23832.1"/>
    <property type="molecule type" value="mRNA"/>
</dbReference>
<dbReference type="EMBL" id="JN412089">
    <property type="protein sequence ID" value="AEP82780.1"/>
    <property type="molecule type" value="Genomic_DNA"/>
</dbReference>
<dbReference type="RefSeq" id="NP_001239041.1">
    <property type="nucleotide sequence ID" value="NM_001252112.1"/>
</dbReference>
<dbReference type="SMR" id="G5CV52"/>
<dbReference type="STRING" id="4081.G5CV52"/>
<dbReference type="PaxDb" id="4081-Solyc12g006570.1.1"/>
<dbReference type="EnsemblPlants" id="Solyc12g006570.2.1">
    <property type="protein sequence ID" value="Solyc12g006570.2.1"/>
    <property type="gene ID" value="Solyc12g006570.2"/>
</dbReference>
<dbReference type="GeneID" id="100820702"/>
<dbReference type="Gramene" id="Solyc12g006570.2.1">
    <property type="protein sequence ID" value="Solyc12g006570.2.1"/>
    <property type="gene ID" value="Solyc12g006570.2"/>
</dbReference>
<dbReference type="KEGG" id="sly:100820702"/>
<dbReference type="eggNOG" id="ENOG502QUCN">
    <property type="taxonomic scope" value="Eukaryota"/>
</dbReference>
<dbReference type="HOGENOM" id="CLU_003125_7_2_1"/>
<dbReference type="InParanoid" id="G5CV52"/>
<dbReference type="OMA" id="WWKEIDL"/>
<dbReference type="OrthoDB" id="1877784at2759"/>
<dbReference type="PhylomeDB" id="G5CV52"/>
<dbReference type="UniPathway" id="UPA00213"/>
<dbReference type="Proteomes" id="UP000004994">
    <property type="component" value="Chromosome 12"/>
</dbReference>
<dbReference type="ExpressionAtlas" id="G5CV52">
    <property type="expression patterns" value="baseline and differential"/>
</dbReference>
<dbReference type="GO" id="GO:0000287">
    <property type="term" value="F:magnesium ion binding"/>
    <property type="evidence" value="ECO:0007669"/>
    <property type="project" value="InterPro"/>
</dbReference>
<dbReference type="GO" id="GO:0010333">
    <property type="term" value="F:terpene synthase activity"/>
    <property type="evidence" value="ECO:0000314"/>
    <property type="project" value="UniProtKB"/>
</dbReference>
<dbReference type="GO" id="GO:0016102">
    <property type="term" value="P:diterpenoid biosynthetic process"/>
    <property type="evidence" value="ECO:0007669"/>
    <property type="project" value="InterPro"/>
</dbReference>
<dbReference type="GO" id="GO:0009753">
    <property type="term" value="P:response to jasmonic acid"/>
    <property type="evidence" value="ECO:0000270"/>
    <property type="project" value="UniProtKB"/>
</dbReference>
<dbReference type="GO" id="GO:0016114">
    <property type="term" value="P:terpenoid biosynthetic process"/>
    <property type="evidence" value="ECO:0000314"/>
    <property type="project" value="UniProtKB"/>
</dbReference>
<dbReference type="CDD" id="cd00684">
    <property type="entry name" value="Terpene_cyclase_plant_C1"/>
    <property type="match status" value="1"/>
</dbReference>
<dbReference type="FunFam" id="1.10.600.10:FF:000007">
    <property type="entry name" value="Isoprene synthase, chloroplastic"/>
    <property type="match status" value="1"/>
</dbReference>
<dbReference type="FunFam" id="1.50.10.130:FF:000001">
    <property type="entry name" value="Isoprene synthase, chloroplastic"/>
    <property type="match status" value="1"/>
</dbReference>
<dbReference type="Gene3D" id="1.10.600.10">
    <property type="entry name" value="Farnesyl Diphosphate Synthase"/>
    <property type="match status" value="1"/>
</dbReference>
<dbReference type="Gene3D" id="1.50.10.130">
    <property type="entry name" value="Terpene synthase, N-terminal domain"/>
    <property type="match status" value="1"/>
</dbReference>
<dbReference type="InterPro" id="IPR008949">
    <property type="entry name" value="Isoprenoid_synthase_dom_sf"/>
</dbReference>
<dbReference type="InterPro" id="IPR034741">
    <property type="entry name" value="Terpene_cyclase-like_1_C"/>
</dbReference>
<dbReference type="InterPro" id="IPR044814">
    <property type="entry name" value="Terpene_cyclase_plant_C1"/>
</dbReference>
<dbReference type="InterPro" id="IPR001906">
    <property type="entry name" value="Terpene_synth_N"/>
</dbReference>
<dbReference type="InterPro" id="IPR036965">
    <property type="entry name" value="Terpene_synth_N_sf"/>
</dbReference>
<dbReference type="InterPro" id="IPR050148">
    <property type="entry name" value="Terpene_synthase-like"/>
</dbReference>
<dbReference type="InterPro" id="IPR005630">
    <property type="entry name" value="Terpene_synthase_metal-bd"/>
</dbReference>
<dbReference type="InterPro" id="IPR008930">
    <property type="entry name" value="Terpenoid_cyclase/PrenylTrfase"/>
</dbReference>
<dbReference type="PANTHER" id="PTHR31225">
    <property type="entry name" value="OS04G0344100 PROTEIN-RELATED"/>
    <property type="match status" value="1"/>
</dbReference>
<dbReference type="PANTHER" id="PTHR31225:SF209">
    <property type="entry name" value="TERPENE SYNTHASE 17"/>
    <property type="match status" value="1"/>
</dbReference>
<dbReference type="Pfam" id="PF01397">
    <property type="entry name" value="Terpene_synth"/>
    <property type="match status" value="1"/>
</dbReference>
<dbReference type="Pfam" id="PF03936">
    <property type="entry name" value="Terpene_synth_C"/>
    <property type="match status" value="1"/>
</dbReference>
<dbReference type="SFLD" id="SFLDS00005">
    <property type="entry name" value="Isoprenoid_Synthase_Type_I"/>
    <property type="match status" value="1"/>
</dbReference>
<dbReference type="SFLD" id="SFLDG01019">
    <property type="entry name" value="Terpene_Cyclase_Like_1_C_Termi"/>
    <property type="match status" value="1"/>
</dbReference>
<dbReference type="SUPFAM" id="SSF48239">
    <property type="entry name" value="Terpenoid cyclases/Protein prenyltransferases"/>
    <property type="match status" value="1"/>
</dbReference>
<dbReference type="SUPFAM" id="SSF48576">
    <property type="entry name" value="Terpenoid synthases"/>
    <property type="match status" value="1"/>
</dbReference>
<organism>
    <name type="scientific">Solanum lycopersicum</name>
    <name type="common">Tomato</name>
    <name type="synonym">Lycopersicon esculentum</name>
    <dbReference type="NCBI Taxonomy" id="4081"/>
    <lineage>
        <taxon>Eukaryota</taxon>
        <taxon>Viridiplantae</taxon>
        <taxon>Streptophyta</taxon>
        <taxon>Embryophyta</taxon>
        <taxon>Tracheophyta</taxon>
        <taxon>Spermatophyta</taxon>
        <taxon>Magnoliopsida</taxon>
        <taxon>eudicotyledons</taxon>
        <taxon>Gunneridae</taxon>
        <taxon>Pentapetalae</taxon>
        <taxon>asterids</taxon>
        <taxon>lamiids</taxon>
        <taxon>Solanales</taxon>
        <taxon>Solanaceae</taxon>
        <taxon>Solanoideae</taxon>
        <taxon>Solaneae</taxon>
        <taxon>Solanum</taxon>
        <taxon>Solanum subgen. Lycopersicon</taxon>
    </lineage>
</organism>
<sequence>MELCTQTVAADHEVIITRRSGSHHPTLWGDHFLAYADLRGANEGEEKQNEDLKEEVRKMLVMAPSKSLEKLELINTIQCLGLGYHFQSEIDESLSYMYTHYEEYSIGDLHAIALCFRLLRQQGYYVSCDAFKKFTNDQGNFKEELVKDVEGMLSLYEAAQFRVHGEQILDEALNFTIAQLKQILPKLSNSQLAQQITNALKYPIKDGIVRVETRKYISFYQQNQNHNEVLLNFAKLDFNILQTLHKKELSDMTRWWKKMELVNTLPYARDRLVECYFWCLGTYFEPQYSVARKMLTKISFYISIIDDTYDIYGKLDELTLFTQAIERWNIDASEQLPLYMKIIYRDLLDVYDEIEKELANENKSFLVNYSINEMKKVVRGYFQEAKWYYGKKVPTMEQYMKNGISTSAYILLTTTSWLAMGNVATKDAFDWVATEPPIVVASCYIIRLLNDLVSHEEEQKRGNAASAVECYMNEYSVTKEEAHIKIRDIIENYWKDLNEEYFKVDMIIIPRVLLMCIINLTRVAEFIYKDEDAYTFSKNNLKDVISDILVDPII</sequence>
<reference key="1">
    <citation type="journal article" date="2011" name="Plant Mol. Biol.">
        <title>RNA-seq discovery, functional characterization, and comparison of sesquiterpene synthases from Solanum lycopersicum and Solanum habrochaites trichomes.</title>
        <authorList>
            <person name="Bleeker P.M."/>
            <person name="Spyropoulou E.A."/>
            <person name="Diergaarde P.J."/>
            <person name="Volpin H."/>
            <person name="De Both M.T.J."/>
            <person name="Zerbe P."/>
            <person name="Bohlmann J."/>
            <person name="Falara V."/>
            <person name="Matsuba Y."/>
            <person name="Pichersky E."/>
            <person name="Haring M.A."/>
            <person name="Schuurink R.C."/>
        </authorList>
    </citation>
    <scope>NUCLEOTIDE SEQUENCE [MRNA]</scope>
    <scope>FUNCTION</scope>
    <scope>CATALYTIC ACTIVITY</scope>
    <scope>PATHWAY</scope>
    <scope>TISSUE SPECIFICITY</scope>
    <scope>REPRESSION BY JASMONATE</scope>
    <scope>GENE FAMILY</scope>
    <source>
        <strain>cv. Moneymaker</strain>
    </source>
</reference>
<reference key="2">
    <citation type="journal article" date="2011" name="Plant Physiol.">
        <title>The tomato terpene synthase gene family.</title>
        <authorList>
            <person name="Falara V."/>
            <person name="Akhtar T.A."/>
            <person name="Nguyen T.T.H."/>
            <person name="Spyropoulou E.A."/>
            <person name="Bleeker P.M."/>
            <person name="Schauvinhold I."/>
            <person name="Matsuba Y."/>
            <person name="Bonini M.E."/>
            <person name="Schilmiller A.L."/>
            <person name="Last R.L."/>
            <person name="Schuurink R.C."/>
            <person name="Pichersky E."/>
        </authorList>
    </citation>
    <scope>NUCLEOTIDE SEQUENCE [GENOMIC DNA]</scope>
    <scope>TISSUE SPECIFICITY</scope>
    <scope>GENE FAMILY</scope>
    <source>
        <strain>cv. M82</strain>
    </source>
</reference>
<reference key="3">
    <citation type="journal article" date="2012" name="Nature">
        <title>The tomato genome sequence provides insights into fleshy fruit evolution.</title>
        <authorList>
            <consortium name="Tomato Genome Consortium"/>
        </authorList>
    </citation>
    <scope>NUCLEOTIDE SEQUENCE [LARGE SCALE GENOMIC DNA]</scope>
    <source>
        <strain>cv. Heinz 1706</strain>
    </source>
</reference>
<protein>
    <recommendedName>
        <fullName evidence="5 6">Terpene synthase 17</fullName>
        <shortName evidence="5 6">SlTPS17</shortName>
    </recommendedName>
    <alternativeName>
        <fullName evidence="6">(+)-valencene synthase TPS17</fullName>
        <ecNumber evidence="4">4.2.3.73</ecNumber>
    </alternativeName>
    <alternativeName>
        <fullName evidence="6">(E)-beta-farnesene synthase TPS17</fullName>
        <ecNumber evidence="4">4.2.3.47</ecNumber>
    </alternativeName>
    <alternativeName>
        <fullName evidence="6">(E)-beta-ocimene synthase TPS17</fullName>
        <ecNumber evidence="4">4.2.3.106</ecNumber>
    </alternativeName>
    <alternativeName>
        <fullName evidence="6">(E)-gamma-bisabolene synthase TPS17</fullName>
        <ecNumber evidence="4">4.2.3.-</ecNumber>
    </alternativeName>
    <alternativeName>
        <fullName evidence="6">(Z)-beta-ocimene synthase TPS17</fullName>
        <ecNumber evidence="4">4.2.3.-</ecNumber>
    </alternativeName>
    <alternativeName>
        <fullName evidence="6">(Z)-gamma-bisabolene synthase TPS17</fullName>
        <ecNumber evidence="4">4.2.3.-</ecNumber>
    </alternativeName>
    <alternativeName>
        <fullName evidence="6">Alpha-bergamotene synthase TPS17</fullName>
        <ecNumber evidence="4">4.2.3.54</ecNumber>
        <ecNumber evidence="4">4.2.3.81</ecNumber>
    </alternativeName>
    <alternativeName>
        <fullName evidence="6">Beta-bisabolene synthase TPS17</fullName>
        <ecNumber evidence="4">4.2.3.-</ecNumber>
    </alternativeName>
    <alternativeName>
        <fullName evidence="6">Beta-myrcene synthase TPS17</fullName>
        <ecNumber evidence="4">4.2.3.15</ecNumber>
    </alternativeName>
    <alternativeName>
        <fullName evidence="6">Gamma-gurjunene synthase TPS17</fullName>
        <ecNumber evidence="4">4.2.3.-</ecNumber>
    </alternativeName>
    <alternativeName>
        <fullName evidence="6">Gamma-terpinene synthase TPS17</fullName>
        <ecNumber evidence="4">4.2.3.114</ecNumber>
    </alternativeName>
    <alternativeName>
        <fullName evidence="6">Limonene synthase TPS17</fullName>
        <ecNumber evidence="4">4.2.3.-</ecNumber>
    </alternativeName>
    <alternativeName>
        <fullName evidence="6">Terpinolene synthase TPS17</fullName>
        <ecNumber evidence="4">4.2.3.113</ecNumber>
    </alternativeName>
</protein>
<accession>G5CV52</accession>
<name>TPS17_SOLLC</name>
<evidence type="ECO:0000250" key="1">
    <source>
        <dbReference type="UniProtKB" id="A0A1C9J6A7"/>
    </source>
</evidence>
<evidence type="ECO:0000250" key="2">
    <source>
        <dbReference type="UniProtKB" id="Q40577"/>
    </source>
</evidence>
<evidence type="ECO:0000269" key="3">
    <source>
    </source>
</evidence>
<evidence type="ECO:0000269" key="4">
    <source>
    </source>
</evidence>
<evidence type="ECO:0000303" key="5">
    <source>
    </source>
</evidence>
<evidence type="ECO:0000303" key="6">
    <source>
    </source>
</evidence>
<evidence type="ECO:0000305" key="7"/>
<evidence type="ECO:0000312" key="8">
    <source>
        <dbReference type="EnsemblPlants" id="Solyc12g006570.2.1"/>
    </source>
</evidence>
<gene>
    <name evidence="6" type="primary">TPS17</name>
    <name evidence="8" type="synonym">100820702</name>
</gene>